<gene>
    <name evidence="1" type="primary">nadK</name>
    <name type="ordered locus">LI1009</name>
</gene>
<feature type="chain" id="PRO_1000059875" description="NAD kinase">
    <location>
        <begin position="1"/>
        <end position="285"/>
    </location>
</feature>
<feature type="active site" description="Proton acceptor" evidence="1">
    <location>
        <position position="64"/>
    </location>
</feature>
<feature type="binding site" evidence="1">
    <location>
        <begin position="64"/>
        <end position="65"/>
    </location>
    <ligand>
        <name>NAD(+)</name>
        <dbReference type="ChEBI" id="CHEBI:57540"/>
    </ligand>
</feature>
<feature type="binding site" evidence="1">
    <location>
        <begin position="138"/>
        <end position="139"/>
    </location>
    <ligand>
        <name>NAD(+)</name>
        <dbReference type="ChEBI" id="CHEBI:57540"/>
    </ligand>
</feature>
<feature type="binding site" evidence="1">
    <location>
        <position position="149"/>
    </location>
    <ligand>
        <name>NAD(+)</name>
        <dbReference type="ChEBI" id="CHEBI:57540"/>
    </ligand>
</feature>
<feature type="binding site" evidence="1">
    <location>
        <position position="166"/>
    </location>
    <ligand>
        <name>NAD(+)</name>
        <dbReference type="ChEBI" id="CHEBI:57540"/>
    </ligand>
</feature>
<feature type="binding site" evidence="1">
    <location>
        <position position="168"/>
    </location>
    <ligand>
        <name>NAD(+)</name>
        <dbReference type="ChEBI" id="CHEBI:57540"/>
    </ligand>
</feature>
<feature type="binding site" evidence="1">
    <location>
        <position position="176"/>
    </location>
    <ligand>
        <name>NAD(+)</name>
        <dbReference type="ChEBI" id="CHEBI:57540"/>
    </ligand>
</feature>
<feature type="binding site" evidence="1">
    <location>
        <begin position="179"/>
        <end position="184"/>
    </location>
    <ligand>
        <name>NAD(+)</name>
        <dbReference type="ChEBI" id="CHEBI:57540"/>
    </ligand>
</feature>
<feature type="binding site" evidence="1">
    <location>
        <position position="238"/>
    </location>
    <ligand>
        <name>NAD(+)</name>
        <dbReference type="ChEBI" id="CHEBI:57540"/>
    </ligand>
</feature>
<evidence type="ECO:0000255" key="1">
    <source>
        <dbReference type="HAMAP-Rule" id="MF_00361"/>
    </source>
</evidence>
<keyword id="KW-0067">ATP-binding</keyword>
<keyword id="KW-0963">Cytoplasm</keyword>
<keyword id="KW-0418">Kinase</keyword>
<keyword id="KW-0520">NAD</keyword>
<keyword id="KW-0521">NADP</keyword>
<keyword id="KW-0547">Nucleotide-binding</keyword>
<keyword id="KW-1185">Reference proteome</keyword>
<keyword id="KW-0808">Transferase</keyword>
<comment type="function">
    <text evidence="1">Involved in the regulation of the intracellular balance of NAD and NADP, and is a key enzyme in the biosynthesis of NADP. Catalyzes specifically the phosphorylation on 2'-hydroxyl of the adenosine moiety of NAD to yield NADP.</text>
</comment>
<comment type="catalytic activity">
    <reaction evidence="1">
        <text>NAD(+) + ATP = ADP + NADP(+) + H(+)</text>
        <dbReference type="Rhea" id="RHEA:18629"/>
        <dbReference type="ChEBI" id="CHEBI:15378"/>
        <dbReference type="ChEBI" id="CHEBI:30616"/>
        <dbReference type="ChEBI" id="CHEBI:57540"/>
        <dbReference type="ChEBI" id="CHEBI:58349"/>
        <dbReference type="ChEBI" id="CHEBI:456216"/>
        <dbReference type="EC" id="2.7.1.23"/>
    </reaction>
</comment>
<comment type="cofactor">
    <cofactor evidence="1">
        <name>a divalent metal cation</name>
        <dbReference type="ChEBI" id="CHEBI:60240"/>
    </cofactor>
</comment>
<comment type="subcellular location">
    <subcellularLocation>
        <location evidence="1">Cytoplasm</location>
    </subcellularLocation>
</comment>
<comment type="similarity">
    <text evidence="1">Belongs to the NAD kinase family.</text>
</comment>
<sequence length="285" mass="31242">MKTLKHALIVYKVGNPQAEKTAHDIQHWFYNKNVTSNLFSSDIPESQLKQSLVHTQVAIILGGDGTFLSISRNLIEKQIPVLGINFGQVGFLVEIHPENWPQMLEQLYSHKLVLQKKIVLSWSIIRHNQVIKNGFAINDVVVGRGALARVLAVDVSINKHHIGVIRSDGILVSTPLGTSGYTISAHGPLVHPDVQALTLTSVSTLFRSTPPLVLPLSTTITLTPSPHAIEPFLTVDGQEGFVLKPNDSVGIQGIKSGLLIYTTANYSYLQHLQKKGLLSSTDFNL</sequence>
<name>NADK_LAWIP</name>
<accession>Q1MPL4</accession>
<protein>
    <recommendedName>
        <fullName evidence="1">NAD kinase</fullName>
        <ecNumber evidence="1">2.7.1.23</ecNumber>
    </recommendedName>
    <alternativeName>
        <fullName evidence="1">ATP-dependent NAD kinase</fullName>
    </alternativeName>
</protein>
<organism>
    <name type="scientific">Lawsonia intracellularis (strain PHE/MN1-00)</name>
    <dbReference type="NCBI Taxonomy" id="363253"/>
    <lineage>
        <taxon>Bacteria</taxon>
        <taxon>Pseudomonadati</taxon>
        <taxon>Thermodesulfobacteriota</taxon>
        <taxon>Desulfovibrionia</taxon>
        <taxon>Desulfovibrionales</taxon>
        <taxon>Desulfovibrionaceae</taxon>
        <taxon>Lawsonia</taxon>
    </lineage>
</organism>
<dbReference type="EC" id="2.7.1.23" evidence="1"/>
<dbReference type="EMBL" id="AM180252">
    <property type="protein sequence ID" value="CAJ55063.1"/>
    <property type="molecule type" value="Genomic_DNA"/>
</dbReference>
<dbReference type="RefSeq" id="WP_011527092.1">
    <property type="nucleotide sequence ID" value="NC_008011.1"/>
</dbReference>
<dbReference type="SMR" id="Q1MPL4"/>
<dbReference type="STRING" id="363253.LI1009"/>
<dbReference type="KEGG" id="lip:LI1009"/>
<dbReference type="eggNOG" id="COG0061">
    <property type="taxonomic scope" value="Bacteria"/>
</dbReference>
<dbReference type="HOGENOM" id="CLU_008831_0_0_7"/>
<dbReference type="OrthoDB" id="9774737at2"/>
<dbReference type="Proteomes" id="UP000002430">
    <property type="component" value="Chromosome"/>
</dbReference>
<dbReference type="GO" id="GO:0005737">
    <property type="term" value="C:cytoplasm"/>
    <property type="evidence" value="ECO:0007669"/>
    <property type="project" value="UniProtKB-SubCell"/>
</dbReference>
<dbReference type="GO" id="GO:0005524">
    <property type="term" value="F:ATP binding"/>
    <property type="evidence" value="ECO:0007669"/>
    <property type="project" value="UniProtKB-KW"/>
</dbReference>
<dbReference type="GO" id="GO:0046872">
    <property type="term" value="F:metal ion binding"/>
    <property type="evidence" value="ECO:0007669"/>
    <property type="project" value="UniProtKB-UniRule"/>
</dbReference>
<dbReference type="GO" id="GO:0051287">
    <property type="term" value="F:NAD binding"/>
    <property type="evidence" value="ECO:0007669"/>
    <property type="project" value="UniProtKB-ARBA"/>
</dbReference>
<dbReference type="GO" id="GO:0003951">
    <property type="term" value="F:NAD+ kinase activity"/>
    <property type="evidence" value="ECO:0007669"/>
    <property type="project" value="UniProtKB-UniRule"/>
</dbReference>
<dbReference type="GO" id="GO:0019674">
    <property type="term" value="P:NAD metabolic process"/>
    <property type="evidence" value="ECO:0007669"/>
    <property type="project" value="InterPro"/>
</dbReference>
<dbReference type="GO" id="GO:0006741">
    <property type="term" value="P:NADP biosynthetic process"/>
    <property type="evidence" value="ECO:0007669"/>
    <property type="project" value="UniProtKB-UniRule"/>
</dbReference>
<dbReference type="Gene3D" id="3.40.50.10330">
    <property type="entry name" value="Probable inorganic polyphosphate/atp-NAD kinase, domain 1"/>
    <property type="match status" value="1"/>
</dbReference>
<dbReference type="Gene3D" id="2.60.200.30">
    <property type="entry name" value="Probable inorganic polyphosphate/atp-NAD kinase, domain 2"/>
    <property type="match status" value="1"/>
</dbReference>
<dbReference type="HAMAP" id="MF_00361">
    <property type="entry name" value="NAD_kinase"/>
    <property type="match status" value="1"/>
</dbReference>
<dbReference type="InterPro" id="IPR017438">
    <property type="entry name" value="ATP-NAD_kinase_N"/>
</dbReference>
<dbReference type="InterPro" id="IPR017437">
    <property type="entry name" value="ATP-NAD_kinase_PpnK-typ_C"/>
</dbReference>
<dbReference type="InterPro" id="IPR016064">
    <property type="entry name" value="NAD/diacylglycerol_kinase_sf"/>
</dbReference>
<dbReference type="InterPro" id="IPR002504">
    <property type="entry name" value="NADK"/>
</dbReference>
<dbReference type="PANTHER" id="PTHR20275">
    <property type="entry name" value="NAD KINASE"/>
    <property type="match status" value="1"/>
</dbReference>
<dbReference type="PANTHER" id="PTHR20275:SF0">
    <property type="entry name" value="NAD KINASE"/>
    <property type="match status" value="1"/>
</dbReference>
<dbReference type="Pfam" id="PF01513">
    <property type="entry name" value="NAD_kinase"/>
    <property type="match status" value="1"/>
</dbReference>
<dbReference type="Pfam" id="PF20143">
    <property type="entry name" value="NAD_kinase_C"/>
    <property type="match status" value="1"/>
</dbReference>
<dbReference type="SUPFAM" id="SSF111331">
    <property type="entry name" value="NAD kinase/diacylglycerol kinase-like"/>
    <property type="match status" value="1"/>
</dbReference>
<proteinExistence type="inferred from homology"/>
<reference key="1">
    <citation type="submission" date="2005-11" db="EMBL/GenBank/DDBJ databases">
        <title>The complete genome sequence of Lawsonia intracellularis: the causative agent of proliferative enteropathy.</title>
        <authorList>
            <person name="Kaur K."/>
            <person name="Zhang Q."/>
            <person name="Beckler D."/>
            <person name="Munir S."/>
            <person name="Li L."/>
            <person name="Kinsley K."/>
            <person name="Herron L."/>
            <person name="Peterson A."/>
            <person name="May B."/>
            <person name="Singh S."/>
            <person name="Gebhart C."/>
            <person name="Kapur V."/>
        </authorList>
    </citation>
    <scope>NUCLEOTIDE SEQUENCE [LARGE SCALE GENOMIC DNA]</scope>
    <source>
        <strain>PHE/MN1-00</strain>
    </source>
</reference>